<reference key="1">
    <citation type="journal article" date="2001" name="Mol. Phylogenet. Evol.">
        <title>Retrieval of four adaptive lineages in duiker antelope: evidence from mitochondrial DNA sequences and fluorescence in situ hybridization.</title>
        <authorList>
            <person name="van Vuuren B.J."/>
            <person name="Robinson T.J."/>
        </authorList>
    </citation>
    <scope>NUCLEOTIDE SEQUENCE [GENOMIC DNA]</scope>
</reference>
<keyword id="KW-0249">Electron transport</keyword>
<keyword id="KW-0349">Heme</keyword>
<keyword id="KW-0408">Iron</keyword>
<keyword id="KW-0472">Membrane</keyword>
<keyword id="KW-0479">Metal-binding</keyword>
<keyword id="KW-0496">Mitochondrion</keyword>
<keyword id="KW-0999">Mitochondrion inner membrane</keyword>
<keyword id="KW-0679">Respiratory chain</keyword>
<keyword id="KW-0812">Transmembrane</keyword>
<keyword id="KW-1133">Transmembrane helix</keyword>
<keyword id="KW-0813">Transport</keyword>
<keyword id="KW-0830">Ubiquinone</keyword>
<feature type="chain" id="PRO_0000060744" description="Cytochrome b">
    <location>
        <begin position="1"/>
        <end position="379"/>
    </location>
</feature>
<feature type="transmembrane region" description="Helical" evidence="2">
    <location>
        <begin position="33"/>
        <end position="53"/>
    </location>
</feature>
<feature type="transmembrane region" description="Helical" evidence="2">
    <location>
        <begin position="77"/>
        <end position="98"/>
    </location>
</feature>
<feature type="transmembrane region" description="Helical" evidence="2">
    <location>
        <begin position="113"/>
        <end position="133"/>
    </location>
</feature>
<feature type="transmembrane region" description="Helical" evidence="2">
    <location>
        <begin position="178"/>
        <end position="198"/>
    </location>
</feature>
<feature type="transmembrane region" description="Helical" evidence="2">
    <location>
        <begin position="226"/>
        <end position="246"/>
    </location>
</feature>
<feature type="transmembrane region" description="Helical" evidence="2">
    <location>
        <begin position="288"/>
        <end position="308"/>
    </location>
</feature>
<feature type="transmembrane region" description="Helical" evidence="2">
    <location>
        <begin position="320"/>
        <end position="340"/>
    </location>
</feature>
<feature type="transmembrane region" description="Helical" evidence="2">
    <location>
        <begin position="347"/>
        <end position="367"/>
    </location>
</feature>
<feature type="binding site" description="axial binding residue" evidence="2">
    <location>
        <position position="83"/>
    </location>
    <ligand>
        <name>heme b</name>
        <dbReference type="ChEBI" id="CHEBI:60344"/>
        <label>b562</label>
    </ligand>
    <ligandPart>
        <name>Fe</name>
        <dbReference type="ChEBI" id="CHEBI:18248"/>
    </ligandPart>
</feature>
<feature type="binding site" description="axial binding residue" evidence="2">
    <location>
        <position position="97"/>
    </location>
    <ligand>
        <name>heme b</name>
        <dbReference type="ChEBI" id="CHEBI:60344"/>
        <label>b566</label>
    </ligand>
    <ligandPart>
        <name>Fe</name>
        <dbReference type="ChEBI" id="CHEBI:18248"/>
    </ligandPart>
</feature>
<feature type="binding site" description="axial binding residue" evidence="2">
    <location>
        <position position="182"/>
    </location>
    <ligand>
        <name>heme b</name>
        <dbReference type="ChEBI" id="CHEBI:60344"/>
        <label>b562</label>
    </ligand>
    <ligandPart>
        <name>Fe</name>
        <dbReference type="ChEBI" id="CHEBI:18248"/>
    </ligandPart>
</feature>
<feature type="binding site" description="axial binding residue" evidence="2">
    <location>
        <position position="196"/>
    </location>
    <ligand>
        <name>heme b</name>
        <dbReference type="ChEBI" id="CHEBI:60344"/>
        <label>b566</label>
    </ligand>
    <ligandPart>
        <name>Fe</name>
        <dbReference type="ChEBI" id="CHEBI:18248"/>
    </ligandPart>
</feature>
<feature type="binding site" evidence="2">
    <location>
        <position position="201"/>
    </location>
    <ligand>
        <name>a ubiquinone</name>
        <dbReference type="ChEBI" id="CHEBI:16389"/>
    </ligand>
</feature>
<geneLocation type="mitochondrion"/>
<accession>Q9B5R8</accession>
<proteinExistence type="inferred from homology"/>
<organism>
    <name type="scientific">Cephalophorus callipygus</name>
    <name type="common">Peters's duiker</name>
    <name type="synonym">Cephalophus callipygus</name>
    <dbReference type="NCBI Taxonomy" id="129223"/>
    <lineage>
        <taxon>Eukaryota</taxon>
        <taxon>Metazoa</taxon>
        <taxon>Chordata</taxon>
        <taxon>Craniata</taxon>
        <taxon>Vertebrata</taxon>
        <taxon>Euteleostomi</taxon>
        <taxon>Mammalia</taxon>
        <taxon>Eutheria</taxon>
        <taxon>Laurasiatheria</taxon>
        <taxon>Artiodactyla</taxon>
        <taxon>Ruminantia</taxon>
        <taxon>Pecora</taxon>
        <taxon>Bovidae</taxon>
        <taxon>Cephalophinae</taxon>
        <taxon>Cephalophorus</taxon>
    </lineage>
</organism>
<comment type="function">
    <text evidence="2">Component of the ubiquinol-cytochrome c reductase complex (complex III or cytochrome b-c1 complex) that is part of the mitochondrial respiratory chain. The b-c1 complex mediates electron transfer from ubiquinol to cytochrome c. Contributes to the generation of a proton gradient across the mitochondrial membrane that is then used for ATP synthesis.</text>
</comment>
<comment type="cofactor">
    <cofactor evidence="2">
        <name>heme b</name>
        <dbReference type="ChEBI" id="CHEBI:60344"/>
    </cofactor>
    <text evidence="2">Binds 2 heme b groups non-covalently.</text>
</comment>
<comment type="subunit">
    <text evidence="2">The cytochrome bc1 complex contains 11 subunits: 3 respiratory subunits (MT-CYB, CYC1 and UQCRFS1), 2 core proteins (UQCRC1 and UQCRC2) and 6 low-molecular weight proteins (UQCRH/QCR6, UQCRB/QCR7, UQCRQ/QCR8, UQCR10/QCR9, UQCR11/QCR10 and a cleavage product of UQCRFS1). This cytochrome bc1 complex then forms a dimer.</text>
</comment>
<comment type="subcellular location">
    <subcellularLocation>
        <location evidence="2">Mitochondrion inner membrane</location>
        <topology evidence="2">Multi-pass membrane protein</topology>
    </subcellularLocation>
</comment>
<comment type="miscellaneous">
    <text evidence="1">Heme 1 (or BL or b562) is low-potential and absorbs at about 562 nm, and heme 2 (or BH or b566) is high-potential and absorbs at about 566 nm.</text>
</comment>
<comment type="similarity">
    <text evidence="3 4">Belongs to the cytochrome b family.</text>
</comment>
<comment type="caution">
    <text evidence="2">The full-length protein contains only eight transmembrane helices, not nine as predicted by bioinformatics tools.</text>
</comment>
<protein>
    <recommendedName>
        <fullName>Cytochrome b</fullName>
    </recommendedName>
    <alternativeName>
        <fullName>Complex III subunit 3</fullName>
    </alternativeName>
    <alternativeName>
        <fullName>Complex III subunit III</fullName>
    </alternativeName>
    <alternativeName>
        <fullName>Cytochrome b-c1 complex subunit 3</fullName>
    </alternativeName>
    <alternativeName>
        <fullName>Ubiquinol-cytochrome-c reductase complex cytochrome b subunit</fullName>
    </alternativeName>
</protein>
<gene>
    <name type="primary">MT-CYB</name>
    <name type="synonym">COB</name>
    <name type="synonym">CYTB</name>
    <name type="synonym">MTCYB</name>
</gene>
<dbReference type="EMBL" id="AF153886">
    <property type="protein sequence ID" value="AAK26674.1"/>
    <property type="molecule type" value="Genomic_DNA"/>
</dbReference>
<dbReference type="SMR" id="Q9B5R8"/>
<dbReference type="GO" id="GO:0005743">
    <property type="term" value="C:mitochondrial inner membrane"/>
    <property type="evidence" value="ECO:0007669"/>
    <property type="project" value="UniProtKB-SubCell"/>
</dbReference>
<dbReference type="GO" id="GO:0045275">
    <property type="term" value="C:respiratory chain complex III"/>
    <property type="evidence" value="ECO:0007669"/>
    <property type="project" value="InterPro"/>
</dbReference>
<dbReference type="GO" id="GO:0046872">
    <property type="term" value="F:metal ion binding"/>
    <property type="evidence" value="ECO:0007669"/>
    <property type="project" value="UniProtKB-KW"/>
</dbReference>
<dbReference type="GO" id="GO:0008121">
    <property type="term" value="F:ubiquinol-cytochrome-c reductase activity"/>
    <property type="evidence" value="ECO:0007669"/>
    <property type="project" value="InterPro"/>
</dbReference>
<dbReference type="GO" id="GO:0006122">
    <property type="term" value="P:mitochondrial electron transport, ubiquinol to cytochrome c"/>
    <property type="evidence" value="ECO:0007669"/>
    <property type="project" value="TreeGrafter"/>
</dbReference>
<dbReference type="CDD" id="cd00290">
    <property type="entry name" value="cytochrome_b_C"/>
    <property type="match status" value="1"/>
</dbReference>
<dbReference type="CDD" id="cd00284">
    <property type="entry name" value="Cytochrome_b_N"/>
    <property type="match status" value="1"/>
</dbReference>
<dbReference type="FunFam" id="1.20.810.10:FF:000002">
    <property type="entry name" value="Cytochrome b"/>
    <property type="match status" value="1"/>
</dbReference>
<dbReference type="Gene3D" id="1.20.810.10">
    <property type="entry name" value="Cytochrome Bc1 Complex, Chain C"/>
    <property type="match status" value="1"/>
</dbReference>
<dbReference type="InterPro" id="IPR005798">
    <property type="entry name" value="Cyt_b/b6_C"/>
</dbReference>
<dbReference type="InterPro" id="IPR036150">
    <property type="entry name" value="Cyt_b/b6_C_sf"/>
</dbReference>
<dbReference type="InterPro" id="IPR005797">
    <property type="entry name" value="Cyt_b/b6_N"/>
</dbReference>
<dbReference type="InterPro" id="IPR027387">
    <property type="entry name" value="Cytb/b6-like_sf"/>
</dbReference>
<dbReference type="InterPro" id="IPR030689">
    <property type="entry name" value="Cytochrome_b"/>
</dbReference>
<dbReference type="InterPro" id="IPR048260">
    <property type="entry name" value="Cytochrome_b_C_euk/bac"/>
</dbReference>
<dbReference type="InterPro" id="IPR048259">
    <property type="entry name" value="Cytochrome_b_N_euk/bac"/>
</dbReference>
<dbReference type="InterPro" id="IPR016174">
    <property type="entry name" value="Di-haem_cyt_TM"/>
</dbReference>
<dbReference type="PANTHER" id="PTHR19271">
    <property type="entry name" value="CYTOCHROME B"/>
    <property type="match status" value="1"/>
</dbReference>
<dbReference type="PANTHER" id="PTHR19271:SF16">
    <property type="entry name" value="CYTOCHROME B"/>
    <property type="match status" value="1"/>
</dbReference>
<dbReference type="Pfam" id="PF00032">
    <property type="entry name" value="Cytochrom_B_C"/>
    <property type="match status" value="1"/>
</dbReference>
<dbReference type="Pfam" id="PF00033">
    <property type="entry name" value="Cytochrome_B"/>
    <property type="match status" value="1"/>
</dbReference>
<dbReference type="PIRSF" id="PIRSF038885">
    <property type="entry name" value="COB"/>
    <property type="match status" value="1"/>
</dbReference>
<dbReference type="SUPFAM" id="SSF81648">
    <property type="entry name" value="a domain/subunit of cytochrome bc1 complex (Ubiquinol-cytochrome c reductase)"/>
    <property type="match status" value="1"/>
</dbReference>
<dbReference type="SUPFAM" id="SSF81342">
    <property type="entry name" value="Transmembrane di-heme cytochromes"/>
    <property type="match status" value="1"/>
</dbReference>
<dbReference type="PROSITE" id="PS51003">
    <property type="entry name" value="CYTB_CTER"/>
    <property type="match status" value="1"/>
</dbReference>
<dbReference type="PROSITE" id="PS51002">
    <property type="entry name" value="CYTB_NTER"/>
    <property type="match status" value="1"/>
</dbReference>
<name>CYB_CEPCA</name>
<sequence>MTNIRKTHPLLKIVNNAFIDLPAPSNISSWWNFGSLLGICLILQILTGLFLAMHYTADTTTAFSSVTHICRDVNYGWIIRYMHANGASMFFICLFMHVGRGLYYGSYTYMETWNIGVILLFATMATAFMGYVLPWGQMSFWGATVITNLLSAIPYIGTNLVEWIWGGFSVDKATLTRFFAFHFIFPFIIAALAMVHLLFLHETGSNNPTGISSDADKIPFHPYYTIKDILGALLLILVLMTLVLFSPDLLGDPDNYTPANPLNTPPHIKPEWYFLFAYAILRSIPNKLGGVLALVLSILILVLMPLLHTSKQRSMMFRPISQCLFWILVADLLTLTWIGGQPVEHPYIIIGQLASIMYFLLILVLMPMASTIENNLLKW</sequence>
<evidence type="ECO:0000250" key="1"/>
<evidence type="ECO:0000250" key="2">
    <source>
        <dbReference type="UniProtKB" id="P00157"/>
    </source>
</evidence>
<evidence type="ECO:0000255" key="3">
    <source>
        <dbReference type="PROSITE-ProRule" id="PRU00967"/>
    </source>
</evidence>
<evidence type="ECO:0000255" key="4">
    <source>
        <dbReference type="PROSITE-ProRule" id="PRU00968"/>
    </source>
</evidence>